<comment type="function">
    <text evidence="1 2">May act as a bridging protein that binds pectin and other cell wall polysaccharides. Probably involved in maintaining esterification of pectins (By similarity). May be involved in the specific O-acetylation of cell wall polymers (By similarity).</text>
</comment>
<comment type="subcellular location">
    <subcellularLocation>
        <location evidence="4">Membrane</location>
        <topology evidence="4">Single-pass type II membrane protein</topology>
    </subcellularLocation>
</comment>
<comment type="miscellaneous">
    <text evidence="5">Contains 2 motifs that are conserved in esterases, but it is unlikely that this protein belongs to the catalytically active pectin esterases.</text>
</comment>
<comment type="similarity">
    <text evidence="4">Belongs to the PC-esterase family. TBL subfamily.</text>
</comment>
<name>TBL23_ARATH</name>
<feature type="chain" id="PRO_0000425388" description="Protein trichome birefringence-like 23">
    <location>
        <begin position="1"/>
        <end position="432"/>
    </location>
</feature>
<feature type="transmembrane region" description="Helical; Signal-anchor for type II membrane protein" evidence="3">
    <location>
        <begin position="13"/>
        <end position="35"/>
    </location>
</feature>
<feature type="short sequence motif" description="GDS motif">
    <location>
        <begin position="153"/>
        <end position="155"/>
    </location>
</feature>
<feature type="short sequence motif" description="DCXHWCLPGXXDXWN motif">
    <location>
        <begin position="404"/>
        <end position="418"/>
    </location>
</feature>
<organism>
    <name type="scientific">Arabidopsis thaliana</name>
    <name type="common">Mouse-ear cress</name>
    <dbReference type="NCBI Taxonomy" id="3702"/>
    <lineage>
        <taxon>Eukaryota</taxon>
        <taxon>Viridiplantae</taxon>
        <taxon>Streptophyta</taxon>
        <taxon>Embryophyta</taxon>
        <taxon>Tracheophyta</taxon>
        <taxon>Spermatophyta</taxon>
        <taxon>Magnoliopsida</taxon>
        <taxon>eudicotyledons</taxon>
        <taxon>Gunneridae</taxon>
        <taxon>Pentapetalae</taxon>
        <taxon>rosids</taxon>
        <taxon>malvids</taxon>
        <taxon>Brassicales</taxon>
        <taxon>Brassicaceae</taxon>
        <taxon>Camelineae</taxon>
        <taxon>Arabidopsis</taxon>
    </lineage>
</organism>
<gene>
    <name type="primary">TBL23</name>
    <name type="ordered locus">At4g11090</name>
    <name type="ORF">F2P3.4</name>
</gene>
<dbReference type="EMBL" id="AF080120">
    <property type="protein sequence ID" value="AAC35541.1"/>
    <property type="molecule type" value="Genomic_DNA"/>
</dbReference>
<dbReference type="EMBL" id="AL049876">
    <property type="protein sequence ID" value="CAB43044.1"/>
    <property type="molecule type" value="Genomic_DNA"/>
</dbReference>
<dbReference type="EMBL" id="AL161531">
    <property type="protein sequence ID" value="CAB81210.1"/>
    <property type="molecule type" value="Genomic_DNA"/>
</dbReference>
<dbReference type="EMBL" id="CP002687">
    <property type="protein sequence ID" value="AEE82971.1"/>
    <property type="molecule type" value="Genomic_DNA"/>
</dbReference>
<dbReference type="EMBL" id="BT023727">
    <property type="protein sequence ID" value="AAZ23919.1"/>
    <property type="molecule type" value="mRNA"/>
</dbReference>
<dbReference type="PIR" id="T01925">
    <property type="entry name" value="T01925"/>
</dbReference>
<dbReference type="RefSeq" id="NP_192847.1">
    <property type="nucleotide sequence ID" value="NM_117179.3"/>
</dbReference>
<dbReference type="SMR" id="O82509"/>
<dbReference type="FunCoup" id="O82509">
    <property type="interactions" value="370"/>
</dbReference>
<dbReference type="STRING" id="3702.O82509"/>
<dbReference type="PaxDb" id="3702-AT4G11090.1"/>
<dbReference type="ProteomicsDB" id="232991"/>
<dbReference type="EnsemblPlants" id="AT4G11090.1">
    <property type="protein sequence ID" value="AT4G11090.1"/>
    <property type="gene ID" value="AT4G11090"/>
</dbReference>
<dbReference type="GeneID" id="826710"/>
<dbReference type="Gramene" id="AT4G11090.1">
    <property type="protein sequence ID" value="AT4G11090.1"/>
    <property type="gene ID" value="AT4G11090"/>
</dbReference>
<dbReference type="KEGG" id="ath:AT4G11090"/>
<dbReference type="Araport" id="AT4G11090"/>
<dbReference type="TAIR" id="AT4G11090">
    <property type="gene designation" value="TBL23"/>
</dbReference>
<dbReference type="eggNOG" id="ENOG502QSJI">
    <property type="taxonomic scope" value="Eukaryota"/>
</dbReference>
<dbReference type="HOGENOM" id="CLU_020953_6_4_1"/>
<dbReference type="InParanoid" id="O82509"/>
<dbReference type="OMA" id="FTGKWIK"/>
<dbReference type="PhylomeDB" id="O82509"/>
<dbReference type="PRO" id="PR:O82509"/>
<dbReference type="Proteomes" id="UP000006548">
    <property type="component" value="Chromosome 4"/>
</dbReference>
<dbReference type="ExpressionAtlas" id="O82509">
    <property type="expression patterns" value="baseline and differential"/>
</dbReference>
<dbReference type="GO" id="GO:0005797">
    <property type="term" value="C:Golgi medial cisterna"/>
    <property type="evidence" value="ECO:0007005"/>
    <property type="project" value="TAIR"/>
</dbReference>
<dbReference type="GO" id="GO:0016020">
    <property type="term" value="C:membrane"/>
    <property type="evidence" value="ECO:0007669"/>
    <property type="project" value="UniProtKB-SubCell"/>
</dbReference>
<dbReference type="GO" id="GO:0016413">
    <property type="term" value="F:O-acetyltransferase activity"/>
    <property type="evidence" value="ECO:0000314"/>
    <property type="project" value="TAIR"/>
</dbReference>
<dbReference type="InterPro" id="IPR029962">
    <property type="entry name" value="TBL"/>
</dbReference>
<dbReference type="InterPro" id="IPR026057">
    <property type="entry name" value="TBL_C"/>
</dbReference>
<dbReference type="InterPro" id="IPR025846">
    <property type="entry name" value="TBL_N"/>
</dbReference>
<dbReference type="PANTHER" id="PTHR32285:SF344">
    <property type="entry name" value="PROTEIN TRICHOME BIREFRINGENCE-LIKE 23"/>
    <property type="match status" value="1"/>
</dbReference>
<dbReference type="PANTHER" id="PTHR32285">
    <property type="entry name" value="PROTEIN TRICHOME BIREFRINGENCE-LIKE 9-RELATED"/>
    <property type="match status" value="1"/>
</dbReference>
<dbReference type="Pfam" id="PF13839">
    <property type="entry name" value="PC-Esterase"/>
    <property type="match status" value="1"/>
</dbReference>
<dbReference type="Pfam" id="PF14416">
    <property type="entry name" value="PMR5N"/>
    <property type="match status" value="1"/>
</dbReference>
<accession>O82509</accession>
<protein>
    <recommendedName>
        <fullName>Protein trichome birefringence-like 23</fullName>
    </recommendedName>
</protein>
<reference key="1">
    <citation type="journal article" date="1999" name="Nature">
        <title>Sequence and analysis of chromosome 4 of the plant Arabidopsis thaliana.</title>
        <authorList>
            <person name="Mayer K.F.X."/>
            <person name="Schueller C."/>
            <person name="Wambutt R."/>
            <person name="Murphy G."/>
            <person name="Volckaert G."/>
            <person name="Pohl T."/>
            <person name="Duesterhoeft A."/>
            <person name="Stiekema W."/>
            <person name="Entian K.-D."/>
            <person name="Terryn N."/>
            <person name="Harris B."/>
            <person name="Ansorge W."/>
            <person name="Brandt P."/>
            <person name="Grivell L.A."/>
            <person name="Rieger M."/>
            <person name="Weichselgartner M."/>
            <person name="de Simone V."/>
            <person name="Obermaier B."/>
            <person name="Mache R."/>
            <person name="Mueller M."/>
            <person name="Kreis M."/>
            <person name="Delseny M."/>
            <person name="Puigdomenech P."/>
            <person name="Watson M."/>
            <person name="Schmidtheini T."/>
            <person name="Reichert B."/>
            <person name="Portetelle D."/>
            <person name="Perez-Alonso M."/>
            <person name="Boutry M."/>
            <person name="Bancroft I."/>
            <person name="Vos P."/>
            <person name="Hoheisel J."/>
            <person name="Zimmermann W."/>
            <person name="Wedler H."/>
            <person name="Ridley P."/>
            <person name="Langham S.-A."/>
            <person name="McCullagh B."/>
            <person name="Bilham L."/>
            <person name="Robben J."/>
            <person name="van der Schueren J."/>
            <person name="Grymonprez B."/>
            <person name="Chuang Y.-J."/>
            <person name="Vandenbussche F."/>
            <person name="Braeken M."/>
            <person name="Weltjens I."/>
            <person name="Voet M."/>
            <person name="Bastiaens I."/>
            <person name="Aert R."/>
            <person name="Defoor E."/>
            <person name="Weitzenegger T."/>
            <person name="Bothe G."/>
            <person name="Ramsperger U."/>
            <person name="Hilbert H."/>
            <person name="Braun M."/>
            <person name="Holzer E."/>
            <person name="Brandt A."/>
            <person name="Peters S."/>
            <person name="van Staveren M."/>
            <person name="Dirkse W."/>
            <person name="Mooijman P."/>
            <person name="Klein Lankhorst R."/>
            <person name="Rose M."/>
            <person name="Hauf J."/>
            <person name="Koetter P."/>
            <person name="Berneiser S."/>
            <person name="Hempel S."/>
            <person name="Feldpausch M."/>
            <person name="Lamberth S."/>
            <person name="Van den Daele H."/>
            <person name="De Keyser A."/>
            <person name="Buysshaert C."/>
            <person name="Gielen J."/>
            <person name="Villarroel R."/>
            <person name="De Clercq R."/>
            <person name="van Montagu M."/>
            <person name="Rogers J."/>
            <person name="Cronin A."/>
            <person name="Quail M.A."/>
            <person name="Bray-Allen S."/>
            <person name="Clark L."/>
            <person name="Doggett J."/>
            <person name="Hall S."/>
            <person name="Kay M."/>
            <person name="Lennard N."/>
            <person name="McLay K."/>
            <person name="Mayes R."/>
            <person name="Pettett A."/>
            <person name="Rajandream M.A."/>
            <person name="Lyne M."/>
            <person name="Benes V."/>
            <person name="Rechmann S."/>
            <person name="Borkova D."/>
            <person name="Bloecker H."/>
            <person name="Scharfe M."/>
            <person name="Grimm M."/>
            <person name="Loehnert T.-H."/>
            <person name="Dose S."/>
            <person name="de Haan M."/>
            <person name="Maarse A.C."/>
            <person name="Schaefer M."/>
            <person name="Mueller-Auer S."/>
            <person name="Gabel C."/>
            <person name="Fuchs M."/>
            <person name="Fartmann B."/>
            <person name="Granderath K."/>
            <person name="Dauner D."/>
            <person name="Herzl A."/>
            <person name="Neumann S."/>
            <person name="Argiriou A."/>
            <person name="Vitale D."/>
            <person name="Liguori R."/>
            <person name="Piravandi E."/>
            <person name="Massenet O."/>
            <person name="Quigley F."/>
            <person name="Clabauld G."/>
            <person name="Muendlein A."/>
            <person name="Felber R."/>
            <person name="Schnabl S."/>
            <person name="Hiller R."/>
            <person name="Schmidt W."/>
            <person name="Lecharny A."/>
            <person name="Aubourg S."/>
            <person name="Chefdor F."/>
            <person name="Cooke R."/>
            <person name="Berger C."/>
            <person name="Monfort A."/>
            <person name="Casacuberta E."/>
            <person name="Gibbons T."/>
            <person name="Weber N."/>
            <person name="Vandenbol M."/>
            <person name="Bargues M."/>
            <person name="Terol J."/>
            <person name="Torres A."/>
            <person name="Perez-Perez A."/>
            <person name="Purnelle B."/>
            <person name="Bent E."/>
            <person name="Johnson S."/>
            <person name="Tacon D."/>
            <person name="Jesse T."/>
            <person name="Heijnen L."/>
            <person name="Schwarz S."/>
            <person name="Scholler P."/>
            <person name="Heber S."/>
            <person name="Francs P."/>
            <person name="Bielke C."/>
            <person name="Frishman D."/>
            <person name="Haase D."/>
            <person name="Lemcke K."/>
            <person name="Mewes H.-W."/>
            <person name="Stocker S."/>
            <person name="Zaccaria P."/>
            <person name="Bevan M."/>
            <person name="Wilson R.K."/>
            <person name="de la Bastide M."/>
            <person name="Habermann K."/>
            <person name="Parnell L."/>
            <person name="Dedhia N."/>
            <person name="Gnoj L."/>
            <person name="Schutz K."/>
            <person name="Huang E."/>
            <person name="Spiegel L."/>
            <person name="Sekhon M."/>
            <person name="Murray J."/>
            <person name="Sheet P."/>
            <person name="Cordes M."/>
            <person name="Abu-Threideh J."/>
            <person name="Stoneking T."/>
            <person name="Kalicki J."/>
            <person name="Graves T."/>
            <person name="Harmon G."/>
            <person name="Edwards J."/>
            <person name="Latreille P."/>
            <person name="Courtney L."/>
            <person name="Cloud J."/>
            <person name="Abbott A."/>
            <person name="Scott K."/>
            <person name="Johnson D."/>
            <person name="Minx P."/>
            <person name="Bentley D."/>
            <person name="Fulton B."/>
            <person name="Miller N."/>
            <person name="Greco T."/>
            <person name="Kemp K."/>
            <person name="Kramer J."/>
            <person name="Fulton L."/>
            <person name="Mardis E."/>
            <person name="Dante M."/>
            <person name="Pepin K."/>
            <person name="Hillier L.W."/>
            <person name="Nelson J."/>
            <person name="Spieth J."/>
            <person name="Ryan E."/>
            <person name="Andrews S."/>
            <person name="Geisel C."/>
            <person name="Layman D."/>
            <person name="Du H."/>
            <person name="Ali J."/>
            <person name="Berghoff A."/>
            <person name="Jones K."/>
            <person name="Drone K."/>
            <person name="Cotton M."/>
            <person name="Joshu C."/>
            <person name="Antonoiu B."/>
            <person name="Zidanic M."/>
            <person name="Strong C."/>
            <person name="Sun H."/>
            <person name="Lamar B."/>
            <person name="Yordan C."/>
            <person name="Ma P."/>
            <person name="Zhong J."/>
            <person name="Preston R."/>
            <person name="Vil D."/>
            <person name="Shekher M."/>
            <person name="Matero A."/>
            <person name="Shah R."/>
            <person name="Swaby I.K."/>
            <person name="O'Shaughnessy A."/>
            <person name="Rodriguez M."/>
            <person name="Hoffman J."/>
            <person name="Till S."/>
            <person name="Granat S."/>
            <person name="Shohdy N."/>
            <person name="Hasegawa A."/>
            <person name="Hameed A."/>
            <person name="Lodhi M."/>
            <person name="Johnson A."/>
            <person name="Chen E."/>
            <person name="Marra M.A."/>
            <person name="Martienssen R."/>
            <person name="McCombie W.R."/>
        </authorList>
    </citation>
    <scope>NUCLEOTIDE SEQUENCE [LARGE SCALE GENOMIC DNA]</scope>
    <source>
        <strain>cv. Columbia</strain>
    </source>
</reference>
<reference key="2">
    <citation type="journal article" date="2017" name="Plant J.">
        <title>Araport11: a complete reannotation of the Arabidopsis thaliana reference genome.</title>
        <authorList>
            <person name="Cheng C.Y."/>
            <person name="Krishnakumar V."/>
            <person name="Chan A.P."/>
            <person name="Thibaud-Nissen F."/>
            <person name="Schobel S."/>
            <person name="Town C.D."/>
        </authorList>
    </citation>
    <scope>GENOME REANNOTATION</scope>
    <source>
        <strain>cv. Columbia</strain>
    </source>
</reference>
<reference key="3">
    <citation type="submission" date="2005-07" db="EMBL/GenBank/DDBJ databases">
        <title>Arabidopsis ORF clones.</title>
        <authorList>
            <person name="Kim C.J."/>
            <person name="Chen H."/>
            <person name="Cheuk R."/>
            <person name="Shinn P."/>
            <person name="Ecker J.R."/>
        </authorList>
    </citation>
    <scope>NUCLEOTIDE SEQUENCE [LARGE SCALE MRNA]</scope>
</reference>
<reference key="4">
    <citation type="journal article" date="2007" name="Plant J.">
        <title>Arabidopsis ESK1 encodes a novel regulator of freezing tolerance.</title>
        <authorList>
            <person name="Xin Z."/>
            <person name="Mandaokar A."/>
            <person name="Chen J."/>
            <person name="Last R.L."/>
            <person name="Browse J."/>
        </authorList>
    </citation>
    <scope>GENE FAMILY</scope>
    <source>
        <strain>cv. Columbia</strain>
    </source>
</reference>
<reference key="5">
    <citation type="journal article" date="2010" name="Plant Physiol.">
        <title>TRICHOME BIREFRINGENCE and its homolog AT5G01360 encode plant-specific DUF231 proteins required for cellulose biosynthesis in Arabidopsis.</title>
        <authorList>
            <person name="Bischoff V."/>
            <person name="Nita S."/>
            <person name="Neumetzler L."/>
            <person name="Schindelasch D."/>
            <person name="Urbain A."/>
            <person name="Eshed R."/>
            <person name="Persson S."/>
            <person name="Delmer D."/>
            <person name="Scheible W.R."/>
        </authorList>
    </citation>
    <scope>GENE FAMILY</scope>
    <scope>NOMENCLATURE</scope>
</reference>
<reference key="6">
    <citation type="journal article" date="2010" name="Plant Signal. Behav.">
        <title>Involvement of TBL/DUF231 proteins into cell wall biology.</title>
        <authorList>
            <person name="Bischoff V."/>
            <person name="Selbig J."/>
            <person name="Scheible W.R."/>
        </authorList>
    </citation>
    <scope>3D-STRUCTURE MODELING</scope>
</reference>
<sequence>MKLKWESISNLQQNTYLIKLVAATLITCLAFRFFVFRFGQFSPVQVSVTGNSNSQISPTSVILSDNEDQIPVDIEVEKCDLFTGKWIKDPLGPIYTNESCGIVVDAHQNCITNGRPDSGFLNWKWKPNDCSLPRFDSLRFLQLMRNKSWAIIGDSIARNHVESLLCMLSTVEKPVEVYHDENYRSKRWHFPSYNFTVSNIWSPFLVQADIFEDSNGVSSAAVQLHLDKLDNTWTDLFPSLDYAIISSGEWFLKTAVYHENANPVGCHGCPESSNMTDLGFDYAYNTSLRHVMDFIAKSKTKGMIFFRTSIPDHFEDGEWHNGGTCKKTEPVGEEAVEMKVLNKILRDVEINQFERVVTEMGQESENLKLLDFAGMLLTRPDGHPGPYREFRPFDKDKNATVQNDCLHWCLPGPIDHLNDVILEIIVNGRTGK</sequence>
<proteinExistence type="evidence at transcript level"/>
<keyword id="KW-0472">Membrane</keyword>
<keyword id="KW-1185">Reference proteome</keyword>
<keyword id="KW-0735">Signal-anchor</keyword>
<keyword id="KW-0812">Transmembrane</keyword>
<keyword id="KW-1133">Transmembrane helix</keyword>
<evidence type="ECO:0000250" key="1">
    <source>
        <dbReference type="UniProtKB" id="Q9FG35"/>
    </source>
</evidence>
<evidence type="ECO:0000250" key="2">
    <source>
        <dbReference type="UniProtKB" id="Q9LY46"/>
    </source>
</evidence>
<evidence type="ECO:0000255" key="3"/>
<evidence type="ECO:0000305" key="4"/>
<evidence type="ECO:0000305" key="5">
    <source>
    </source>
</evidence>